<name>CSKMT_DANRE</name>
<accession>Q501S4</accession>
<feature type="transit peptide" description="Mitochondrion" evidence="2">
    <location>
        <begin position="1"/>
        <end position="45"/>
    </location>
</feature>
<feature type="chain" id="PRO_0000349201" description="Citrate synthase-lysine N-methyltransferase CSKMT, mitochondrial">
    <location>
        <begin position="46"/>
        <end position="254"/>
    </location>
</feature>
<protein>
    <recommendedName>
        <fullName evidence="1">Citrate synthase-lysine N-methyltransferase CSKMT, mitochondrial</fullName>
        <shortName evidence="1">CS-KMT</shortName>
        <ecNumber evidence="1">2.1.1.-</ecNumber>
    </recommendedName>
    <alternativeName>
        <fullName evidence="1">Methyltransferase-like protein 12, mitochondrial</fullName>
    </alternativeName>
</protein>
<sequence>MLLNRFLVPLRSLQKLTQARRWHQTSLINDLVVNMDKKAMWDRFYTENGSKGQFKNFEWFFGFPSVKDLVLPALQAMSCSHSGPLHILDMGCGTSALGPCIYSTSPCAVRVTCADISPVAVKLMEEHTKSTSTQPCNPSSALVFLELDCTQMTGHFKSRSLDLILDKGTTDALVRSKEGQVKAGQILRQSLQVLRPSGSFLQFSDEDPDARLIWLEREVQGAEVTADVGVQEIGELRGVSYFCYQISPRSRPHS</sequence>
<dbReference type="EC" id="2.1.1.-" evidence="1"/>
<dbReference type="EMBL" id="BC095893">
    <property type="protein sequence ID" value="AAH95893.1"/>
    <property type="status" value="ALT_INIT"/>
    <property type="molecule type" value="mRNA"/>
</dbReference>
<dbReference type="RefSeq" id="NP_001018613.1">
    <property type="nucleotide sequence ID" value="NM_001020777.1"/>
</dbReference>
<dbReference type="SMR" id="Q501S4"/>
<dbReference type="FunCoup" id="Q501S4">
    <property type="interactions" value="26"/>
</dbReference>
<dbReference type="STRING" id="7955.ENSDARP00000071604"/>
<dbReference type="PaxDb" id="7955-ENSDARP00000071604"/>
<dbReference type="DNASU" id="553815"/>
<dbReference type="GeneID" id="553815"/>
<dbReference type="KEGG" id="dre:553815"/>
<dbReference type="AGR" id="ZFIN:ZDB-GENE-050522-31"/>
<dbReference type="CTD" id="751071"/>
<dbReference type="ZFIN" id="ZDB-GENE-050522-31">
    <property type="gene designation" value="cskmt"/>
</dbReference>
<dbReference type="eggNOG" id="KOG2352">
    <property type="taxonomic scope" value="Eukaryota"/>
</dbReference>
<dbReference type="InParanoid" id="Q501S4"/>
<dbReference type="OrthoDB" id="411785at2759"/>
<dbReference type="PhylomeDB" id="Q501S4"/>
<dbReference type="Reactome" id="R-DRE-9854311">
    <property type="pathway name" value="Maturation of TCA enzymes and regulation of TCA cycle"/>
</dbReference>
<dbReference type="PRO" id="PR:Q501S4"/>
<dbReference type="Proteomes" id="UP000000437">
    <property type="component" value="Chromosome 7"/>
</dbReference>
<dbReference type="GO" id="GO:0005739">
    <property type="term" value="C:mitochondrion"/>
    <property type="evidence" value="ECO:0007669"/>
    <property type="project" value="UniProtKB-SubCell"/>
</dbReference>
<dbReference type="GO" id="GO:0016278">
    <property type="term" value="F:lysine N-methyltransferase activity"/>
    <property type="evidence" value="ECO:0000250"/>
    <property type="project" value="UniProtKB"/>
</dbReference>
<dbReference type="GO" id="GO:0016279">
    <property type="term" value="F:protein-lysine N-methyltransferase activity"/>
    <property type="evidence" value="ECO:0000250"/>
    <property type="project" value="UniProtKB"/>
</dbReference>
<dbReference type="GO" id="GO:0018027">
    <property type="term" value="P:peptidyl-lysine dimethylation"/>
    <property type="evidence" value="ECO:0000250"/>
    <property type="project" value="UniProtKB"/>
</dbReference>
<dbReference type="GO" id="GO:0018026">
    <property type="term" value="P:peptidyl-lysine monomethylation"/>
    <property type="evidence" value="ECO:0000250"/>
    <property type="project" value="UniProtKB"/>
</dbReference>
<dbReference type="GO" id="GO:0018023">
    <property type="term" value="P:peptidyl-lysine trimethylation"/>
    <property type="evidence" value="ECO:0000250"/>
    <property type="project" value="UniProtKB"/>
</dbReference>
<dbReference type="GO" id="GO:0006479">
    <property type="term" value="P:protein methylation"/>
    <property type="evidence" value="ECO:0000250"/>
    <property type="project" value="UniProtKB"/>
</dbReference>
<dbReference type="CDD" id="cd02440">
    <property type="entry name" value="AdoMet_MTases"/>
    <property type="match status" value="1"/>
</dbReference>
<dbReference type="FunFam" id="3.40.50.150:FF:000200">
    <property type="entry name" value="Citrate synthase lysine methyltransferase"/>
    <property type="match status" value="1"/>
</dbReference>
<dbReference type="Gene3D" id="3.40.50.150">
    <property type="entry name" value="Vaccinia Virus protein VP39"/>
    <property type="match status" value="1"/>
</dbReference>
<dbReference type="InterPro" id="IPR051419">
    <property type="entry name" value="Lys/N-term_MeTrsfase_sf"/>
</dbReference>
<dbReference type="InterPro" id="IPR025714">
    <property type="entry name" value="Methyltranfer_dom"/>
</dbReference>
<dbReference type="InterPro" id="IPR029063">
    <property type="entry name" value="SAM-dependent_MTases_sf"/>
</dbReference>
<dbReference type="PANTHER" id="PTHR12176:SF83">
    <property type="entry name" value="CITRATE SYNTHASE-LYSINE N-METHYLTRANSFERASE CSKMT, MITOCHONDRIAL"/>
    <property type="match status" value="1"/>
</dbReference>
<dbReference type="PANTHER" id="PTHR12176">
    <property type="entry name" value="SAM-DEPENDENT METHYLTRANSFERASE SUPERFAMILY PROTEIN"/>
    <property type="match status" value="1"/>
</dbReference>
<dbReference type="Pfam" id="PF13847">
    <property type="entry name" value="Methyltransf_31"/>
    <property type="match status" value="1"/>
</dbReference>
<dbReference type="SUPFAM" id="SSF53335">
    <property type="entry name" value="S-adenosyl-L-methionine-dependent methyltransferases"/>
    <property type="match status" value="1"/>
</dbReference>
<evidence type="ECO:0000250" key="1">
    <source>
        <dbReference type="UniProtKB" id="A8MUP2"/>
    </source>
</evidence>
<evidence type="ECO:0000255" key="2"/>
<evidence type="ECO:0000305" key="3"/>
<reference key="1">
    <citation type="submission" date="2005-05" db="EMBL/GenBank/DDBJ databases">
        <authorList>
            <consortium name="NIH - Zebrafish Gene Collection (ZGC) project"/>
        </authorList>
    </citation>
    <scope>NUCLEOTIDE SEQUENCE [LARGE SCALE MRNA]</scope>
    <source>
        <tissue>Embryo</tissue>
    </source>
</reference>
<comment type="function">
    <text evidence="1">Protein-lysine methyltransferase that selectively trimethylates citrate synthase (CS) in mitochondria. Seems to conduct trimethylation in a highly distributive manner rather than in a processive manner, and thus introduces a single methyl group per binding event.</text>
</comment>
<comment type="catalytic activity">
    <reaction evidence="1">
        <text>L-lysyl-[citrate synthase] + S-adenosyl-L-methionine = N(6)-methyl-L-lysyl-[citrate synthase] + S-adenosyl-L-homocysteine + H(+)</text>
        <dbReference type="Rhea" id="RHEA:55544"/>
        <dbReference type="Rhea" id="RHEA-COMP:14212"/>
        <dbReference type="Rhea" id="RHEA-COMP:14213"/>
        <dbReference type="ChEBI" id="CHEBI:15378"/>
        <dbReference type="ChEBI" id="CHEBI:29969"/>
        <dbReference type="ChEBI" id="CHEBI:57856"/>
        <dbReference type="ChEBI" id="CHEBI:59789"/>
        <dbReference type="ChEBI" id="CHEBI:61929"/>
    </reaction>
</comment>
<comment type="catalytic activity">
    <reaction evidence="1">
        <text>N(6)-methyl-L-lysyl-[citrate synthase] + S-adenosyl-L-methionine = N(6),N(6)-dimethyl-L-lysyl-[citrate synthase] + S-adenosyl-L-homocysteine + H(+)</text>
        <dbReference type="Rhea" id="RHEA:55548"/>
        <dbReference type="Rhea" id="RHEA-COMP:14213"/>
        <dbReference type="Rhea" id="RHEA-COMP:14214"/>
        <dbReference type="ChEBI" id="CHEBI:15378"/>
        <dbReference type="ChEBI" id="CHEBI:57856"/>
        <dbReference type="ChEBI" id="CHEBI:59789"/>
        <dbReference type="ChEBI" id="CHEBI:61929"/>
        <dbReference type="ChEBI" id="CHEBI:61976"/>
    </reaction>
</comment>
<comment type="catalytic activity">
    <reaction evidence="1">
        <text>N(6),N(6)-dimethyl-L-lysyl-[citrate synthase] + S-adenosyl-L-methionine = N(6),N(6),N(6)-trimethyl-L-lysyl-[citrate synthase] + S-adenosyl-L-homocysteine + H(+)</text>
        <dbReference type="Rhea" id="RHEA:55552"/>
        <dbReference type="Rhea" id="RHEA-COMP:14214"/>
        <dbReference type="Rhea" id="RHEA-COMP:14215"/>
        <dbReference type="ChEBI" id="CHEBI:15378"/>
        <dbReference type="ChEBI" id="CHEBI:57856"/>
        <dbReference type="ChEBI" id="CHEBI:59789"/>
        <dbReference type="ChEBI" id="CHEBI:61961"/>
        <dbReference type="ChEBI" id="CHEBI:61976"/>
    </reaction>
</comment>
<comment type="activity regulation">
    <text evidence="1">Citrate synthase-lysine methyltransferase activity is inhibited by S-adenosylhomocysteine (AdoHcy) and oxaloacetate (OAA).</text>
</comment>
<comment type="subcellular location">
    <subcellularLocation>
        <location evidence="1">Mitochondrion</location>
    </subcellularLocation>
</comment>
<comment type="similarity">
    <text evidence="3">Belongs to the methyltransferase superfamily.</text>
</comment>
<comment type="sequence caution" evidence="3">
    <conflict type="erroneous initiation">
        <sequence resource="EMBL-CDS" id="AAH95893"/>
    </conflict>
</comment>
<keyword id="KW-0489">Methyltransferase</keyword>
<keyword id="KW-0496">Mitochondrion</keyword>
<keyword id="KW-1185">Reference proteome</keyword>
<keyword id="KW-0949">S-adenosyl-L-methionine</keyword>
<keyword id="KW-0808">Transferase</keyword>
<keyword id="KW-0809">Transit peptide</keyword>
<gene>
    <name evidence="1" type="primary">cskmt</name>
    <name evidence="1" type="synonym">mettl12</name>
    <name type="ORF">zgc:113305</name>
</gene>
<organism>
    <name type="scientific">Danio rerio</name>
    <name type="common">Zebrafish</name>
    <name type="synonym">Brachydanio rerio</name>
    <dbReference type="NCBI Taxonomy" id="7955"/>
    <lineage>
        <taxon>Eukaryota</taxon>
        <taxon>Metazoa</taxon>
        <taxon>Chordata</taxon>
        <taxon>Craniata</taxon>
        <taxon>Vertebrata</taxon>
        <taxon>Euteleostomi</taxon>
        <taxon>Actinopterygii</taxon>
        <taxon>Neopterygii</taxon>
        <taxon>Teleostei</taxon>
        <taxon>Ostariophysi</taxon>
        <taxon>Cypriniformes</taxon>
        <taxon>Danionidae</taxon>
        <taxon>Danioninae</taxon>
        <taxon>Danio</taxon>
    </lineage>
</organism>
<proteinExistence type="evidence at transcript level"/>